<feature type="chain" id="PRO_0000368989" description="ATP synthase subunit b, chloroplastic">
    <location>
        <begin position="1"/>
        <end position="160"/>
    </location>
</feature>
<feature type="transmembrane region" description="Helical" evidence="1">
    <location>
        <begin position="12"/>
        <end position="31"/>
    </location>
</feature>
<accession>Q85FR0</accession>
<dbReference type="EMBL" id="AB002583">
    <property type="protein sequence ID" value="BAC76285.1"/>
    <property type="molecule type" value="Genomic_DNA"/>
</dbReference>
<dbReference type="RefSeq" id="NP_849123.1">
    <property type="nucleotide sequence ID" value="NC_004799.1"/>
</dbReference>
<dbReference type="SMR" id="Q85FR0"/>
<dbReference type="STRING" id="280699.Q85FR0"/>
<dbReference type="EnsemblPlants" id="CMV223CT">
    <property type="protein sequence ID" value="CMV223CT"/>
    <property type="gene ID" value="CMV223C"/>
</dbReference>
<dbReference type="GeneID" id="844869"/>
<dbReference type="Gramene" id="CMV223CT">
    <property type="protein sequence ID" value="CMV223CT"/>
    <property type="gene ID" value="CMV223C"/>
</dbReference>
<dbReference type="KEGG" id="cme:CymeCp191"/>
<dbReference type="HOGENOM" id="CLU_1654634_0_0_1"/>
<dbReference type="Proteomes" id="UP000007014">
    <property type="component" value="Chloroplast"/>
</dbReference>
<dbReference type="GO" id="GO:0009535">
    <property type="term" value="C:chloroplast thylakoid membrane"/>
    <property type="evidence" value="ECO:0007669"/>
    <property type="project" value="UniProtKB-SubCell"/>
</dbReference>
<dbReference type="GO" id="GO:0045259">
    <property type="term" value="C:proton-transporting ATP synthase complex"/>
    <property type="evidence" value="ECO:0007669"/>
    <property type="project" value="UniProtKB-KW"/>
</dbReference>
<dbReference type="GO" id="GO:0046933">
    <property type="term" value="F:proton-transporting ATP synthase activity, rotational mechanism"/>
    <property type="evidence" value="ECO:0007669"/>
    <property type="project" value="UniProtKB-UniRule"/>
</dbReference>
<dbReference type="CDD" id="cd06503">
    <property type="entry name" value="ATP-synt_Fo_b"/>
    <property type="match status" value="1"/>
</dbReference>
<dbReference type="HAMAP" id="MF_01398">
    <property type="entry name" value="ATP_synth_b_bprime"/>
    <property type="match status" value="1"/>
</dbReference>
<dbReference type="InterPro" id="IPR002146">
    <property type="entry name" value="ATP_synth_b/b'su_bac/chlpt"/>
</dbReference>
<dbReference type="PANTHER" id="PTHR34264">
    <property type="entry name" value="ATP SYNTHASE SUBUNIT B, CHLOROPLASTIC"/>
    <property type="match status" value="1"/>
</dbReference>
<dbReference type="PANTHER" id="PTHR34264:SF3">
    <property type="entry name" value="ATP SYNTHASE SUBUNIT B, CHLOROPLASTIC"/>
    <property type="match status" value="1"/>
</dbReference>
<dbReference type="Pfam" id="PF00430">
    <property type="entry name" value="ATP-synt_B"/>
    <property type="match status" value="1"/>
</dbReference>
<sequence length="160" mass="18403">MHTLLETLLESNVINIAILVVILIRFARQVVGEILVQRQQQVKEALEEASNRLKLAEQQLKTAQEEWSQTQEQINQIEEEANQTAQVVKEYWLKQANEAIAQLKTKTQQSLSQASRQVAKQIRQTLIELAIEKVKQTPIDGSQILDRHISLLSYHEAKNR</sequence>
<name>ATPF_CYAM1</name>
<protein>
    <recommendedName>
        <fullName evidence="1">ATP synthase subunit b, chloroplastic</fullName>
    </recommendedName>
    <alternativeName>
        <fullName evidence="1">ATP synthase F(0) sector subunit b</fullName>
    </alternativeName>
    <alternativeName>
        <fullName evidence="1">ATPase subunit I</fullName>
    </alternativeName>
</protein>
<organism>
    <name type="scientific">Cyanidioschyzon merolae (strain NIES-3377 / 10D)</name>
    <name type="common">Unicellular red alga</name>
    <dbReference type="NCBI Taxonomy" id="280699"/>
    <lineage>
        <taxon>Eukaryota</taxon>
        <taxon>Rhodophyta</taxon>
        <taxon>Bangiophyceae</taxon>
        <taxon>Cyanidiales</taxon>
        <taxon>Cyanidiaceae</taxon>
        <taxon>Cyanidioschyzon</taxon>
    </lineage>
</organism>
<reference key="1">
    <citation type="journal article" date="2003" name="DNA Res.">
        <title>Complete sequence and analysis of the plastid genome of the unicellular red alga Cyanidioschyzon merolae.</title>
        <authorList>
            <person name="Ohta N."/>
            <person name="Matsuzaki M."/>
            <person name="Misumi O."/>
            <person name="Miyagishima S.-Y."/>
            <person name="Nozaki H."/>
            <person name="Tanaka K."/>
            <person name="Shin-i T."/>
            <person name="Kohara Y."/>
            <person name="Kuroiwa T."/>
        </authorList>
    </citation>
    <scope>NUCLEOTIDE SEQUENCE [LARGE SCALE GENOMIC DNA]</scope>
    <source>
        <strain>NIES-3377 / 10D</strain>
    </source>
</reference>
<geneLocation type="chloroplast"/>
<comment type="function">
    <text evidence="1">F(1)F(0) ATP synthase produces ATP from ADP in the presence of a proton or sodium gradient. F-type ATPases consist of two structural domains, F(1) containing the extramembraneous catalytic core and F(0) containing the membrane proton channel, linked together by a central stalk and a peripheral stalk. During catalysis, ATP synthesis in the catalytic domain of F(1) is coupled via a rotary mechanism of the central stalk subunits to proton translocation.</text>
</comment>
<comment type="function">
    <text evidence="1">Component of the F(0) channel, it forms part of the peripheral stalk, linking F(1) to F(0).</text>
</comment>
<comment type="subunit">
    <text evidence="1">F-type ATPases have 2 components, F(1) - the catalytic core - and F(0) - the membrane proton channel. F(1) has five subunits: alpha(3), beta(3), gamma(1), delta(1), epsilon(1). F(0) has four main subunits: a(1), b(1), b'(1) and c(10-14). The alpha and beta chains form an alternating ring which encloses part of the gamma chain. F(1) is attached to F(0) by a central stalk formed by the gamma and epsilon chains, while a peripheral stalk is formed by the delta, b and b' chains.</text>
</comment>
<comment type="subcellular location">
    <subcellularLocation>
        <location evidence="1">Plastid</location>
        <location evidence="1">Chloroplast thylakoid membrane</location>
        <topology evidence="1">Single-pass membrane protein</topology>
    </subcellularLocation>
</comment>
<comment type="miscellaneous">
    <text>In plastids the F-type ATPase is also known as CF(1)CF(0).</text>
</comment>
<comment type="similarity">
    <text evidence="1">Belongs to the ATPase B chain family.</text>
</comment>
<proteinExistence type="inferred from homology"/>
<evidence type="ECO:0000255" key="1">
    <source>
        <dbReference type="HAMAP-Rule" id="MF_01398"/>
    </source>
</evidence>
<keyword id="KW-0066">ATP synthesis</keyword>
<keyword id="KW-0138">CF(0)</keyword>
<keyword id="KW-0150">Chloroplast</keyword>
<keyword id="KW-0375">Hydrogen ion transport</keyword>
<keyword id="KW-0406">Ion transport</keyword>
<keyword id="KW-0472">Membrane</keyword>
<keyword id="KW-0934">Plastid</keyword>
<keyword id="KW-1185">Reference proteome</keyword>
<keyword id="KW-0793">Thylakoid</keyword>
<keyword id="KW-0812">Transmembrane</keyword>
<keyword id="KW-1133">Transmembrane helix</keyword>
<keyword id="KW-0813">Transport</keyword>
<gene>
    <name evidence="1" type="primary">atpF</name>
</gene>